<keyword id="KW-0963">Cytoplasm</keyword>
<keyword id="KW-1185">Reference proteome</keyword>
<sequence>MDKNELVQKAKLAEQAERYDDMAACMKRVTEEGGELSNEERNLLSVAYKNVVGARRSSWRVVSSIEQKTEGAEKKQEMSREYREKIEAELREICNDVLNLLDKFLIANATQPESKVFYLKMKGDYYRYLAEVAAGNAKTEIVGQSQKAYQDAFDISKTEMQPTHPIRLGLALNFSVFYYEILNCPDKACALAKAAFDEAIAELDTLSEESYKDSTLIMQLLRDNLTLWTSDTQGDEAEQGEGGEN</sequence>
<dbReference type="EMBL" id="X95519">
    <property type="protein sequence ID" value="CAA64773.1"/>
    <property type="molecule type" value="mRNA"/>
</dbReference>
<dbReference type="EMBL" id="AF033312">
    <property type="protein sequence ID" value="AAC41252.1"/>
    <property type="molecule type" value="mRNA"/>
</dbReference>
<dbReference type="SMR" id="Q91896"/>
<dbReference type="AGR" id="Xenbase:XB-GENE-6256657"/>
<dbReference type="Xenbase" id="XB-GENE-6256657">
    <property type="gene designation" value="ywhaz.L"/>
</dbReference>
<dbReference type="OMA" id="CENFVYV"/>
<dbReference type="Proteomes" id="UP000186698">
    <property type="component" value="Unplaced"/>
</dbReference>
<dbReference type="GO" id="GO:0005737">
    <property type="term" value="C:cytoplasm"/>
    <property type="evidence" value="ECO:0000318"/>
    <property type="project" value="GO_Central"/>
</dbReference>
<dbReference type="GO" id="GO:0050815">
    <property type="term" value="F:phosphoserine residue binding"/>
    <property type="evidence" value="ECO:0000250"/>
    <property type="project" value="UniProtKB"/>
</dbReference>
<dbReference type="GO" id="GO:0140311">
    <property type="term" value="F:protein sequestering activity"/>
    <property type="evidence" value="ECO:0000250"/>
    <property type="project" value="UniProtKB"/>
</dbReference>
<dbReference type="GO" id="GO:0008104">
    <property type="term" value="P:protein localization"/>
    <property type="evidence" value="ECO:0000318"/>
    <property type="project" value="GO_Central"/>
</dbReference>
<dbReference type="GO" id="GO:0070372">
    <property type="term" value="P:regulation of ERK1 and ERK2 cascade"/>
    <property type="evidence" value="ECO:0000250"/>
    <property type="project" value="UniProtKB"/>
</dbReference>
<dbReference type="GO" id="GO:0007165">
    <property type="term" value="P:signal transduction"/>
    <property type="evidence" value="ECO:0000318"/>
    <property type="project" value="GO_Central"/>
</dbReference>
<dbReference type="CDD" id="cd10022">
    <property type="entry name" value="14-3-3_beta_zeta"/>
    <property type="match status" value="1"/>
</dbReference>
<dbReference type="FunFam" id="1.20.190.20:FF:000001">
    <property type="entry name" value="14-3-3 gamma 1"/>
    <property type="match status" value="1"/>
</dbReference>
<dbReference type="Gene3D" id="1.20.190.20">
    <property type="entry name" value="14-3-3 domain"/>
    <property type="match status" value="1"/>
</dbReference>
<dbReference type="InterPro" id="IPR000308">
    <property type="entry name" value="14-3-3"/>
</dbReference>
<dbReference type="InterPro" id="IPR023409">
    <property type="entry name" value="14-3-3_CS"/>
</dbReference>
<dbReference type="InterPro" id="IPR036815">
    <property type="entry name" value="14-3-3_dom_sf"/>
</dbReference>
<dbReference type="InterPro" id="IPR023410">
    <property type="entry name" value="14-3-3_domain"/>
</dbReference>
<dbReference type="PANTHER" id="PTHR18860">
    <property type="entry name" value="14-3-3 PROTEIN"/>
    <property type="match status" value="1"/>
</dbReference>
<dbReference type="Pfam" id="PF00244">
    <property type="entry name" value="14-3-3"/>
    <property type="match status" value="1"/>
</dbReference>
<dbReference type="PIRSF" id="PIRSF000868">
    <property type="entry name" value="14-3-3"/>
    <property type="match status" value="1"/>
</dbReference>
<dbReference type="PRINTS" id="PR00305">
    <property type="entry name" value="1433ZETA"/>
</dbReference>
<dbReference type="SMART" id="SM00101">
    <property type="entry name" value="14_3_3"/>
    <property type="match status" value="1"/>
</dbReference>
<dbReference type="SUPFAM" id="SSF48445">
    <property type="entry name" value="14-3-3 protein"/>
    <property type="match status" value="1"/>
</dbReference>
<dbReference type="PROSITE" id="PS00796">
    <property type="entry name" value="1433_1"/>
    <property type="match status" value="1"/>
</dbReference>
<dbReference type="PROSITE" id="PS00797">
    <property type="entry name" value="1433_2"/>
    <property type="match status" value="1"/>
</dbReference>
<feature type="chain" id="PRO_0000058633" description="14-3-3 protein zeta">
    <location>
        <begin position="1"/>
        <end position="245"/>
    </location>
</feature>
<feature type="site" description="Interaction with phosphoserine on interacting protein" evidence="1">
    <location>
        <position position="56"/>
    </location>
</feature>
<feature type="site" description="Interaction with phosphoserine on interacting protein" evidence="1">
    <location>
        <position position="127"/>
    </location>
</feature>
<feature type="sequence conflict" description="In Ref. 1." evidence="3" ref="1">
    <original>NFSVFYYEILNCP</original>
    <variation>KLLCVLTNEESSTVQ</variation>
    <location>
        <begin position="173"/>
        <end position="185"/>
    </location>
</feature>
<evidence type="ECO:0000250" key="1">
    <source>
        <dbReference type="UniProtKB" id="P63103"/>
    </source>
</evidence>
<evidence type="ECO:0000250" key="2">
    <source>
        <dbReference type="UniProtKB" id="P63104"/>
    </source>
</evidence>
<evidence type="ECO:0000305" key="3"/>
<comment type="function">
    <text evidence="2">Adapter protein implicated in the regulation of a large spectrum of both general and specialized signaling pathways. Binds to a large number of partners, usually by recognition of a phosphoserine or phosphothreonine motif. Binding generally results in the modulation of the activity of the binding partner.</text>
</comment>
<comment type="subunit">
    <text evidence="2">Homodimer.</text>
</comment>
<comment type="subcellular location">
    <subcellularLocation>
        <location evidence="2">Cytoplasm</location>
    </subcellularLocation>
</comment>
<comment type="tissue specificity">
    <text>Present in all adult tissues examined with the highest levels in the brain.</text>
</comment>
<comment type="similarity">
    <text evidence="3">Belongs to the 14-3-3 family.</text>
</comment>
<organism>
    <name type="scientific">Xenopus laevis</name>
    <name type="common">African clawed frog</name>
    <dbReference type="NCBI Taxonomy" id="8355"/>
    <lineage>
        <taxon>Eukaryota</taxon>
        <taxon>Metazoa</taxon>
        <taxon>Chordata</taxon>
        <taxon>Craniata</taxon>
        <taxon>Vertebrata</taxon>
        <taxon>Euteleostomi</taxon>
        <taxon>Amphibia</taxon>
        <taxon>Batrachia</taxon>
        <taxon>Anura</taxon>
        <taxon>Pipoidea</taxon>
        <taxon>Pipidae</taxon>
        <taxon>Xenopodinae</taxon>
        <taxon>Xenopus</taxon>
        <taxon>Xenopus</taxon>
    </lineage>
</organism>
<gene>
    <name type="primary">ywhaz</name>
</gene>
<name>1433Z_XENLA</name>
<protein>
    <recommendedName>
        <fullName>14-3-3 protein zeta</fullName>
    </recommendedName>
</protein>
<reference key="1">
    <citation type="journal article" date="1997" name="Gene">
        <title>Sequence and expression analysis of a Xenopus laevis cDNA which encodes a homologue of mammalian 14-3-3 zeta protein.</title>
        <authorList>
            <person name="Kousteni S."/>
            <person name="Tura F."/>
            <person name="Sweeney G.E."/>
            <person name="Ramji D.P."/>
        </authorList>
    </citation>
    <scope>NUCLEOTIDE SEQUENCE [MRNA]</scope>
</reference>
<reference key="2">
    <citation type="journal article" date="1998" name="Mol. Biol. Cell">
        <title>14-3-3 proteins act as negative regulators of the mitotic inducer Cdc25 in Xenopus egg extracts.</title>
        <authorList>
            <person name="Kumagai A."/>
            <person name="Yakowec P.S."/>
            <person name="Dunphy W.G."/>
        </authorList>
    </citation>
    <scope>NUCLEOTIDE SEQUENCE [MRNA]</scope>
</reference>
<accession>Q91896</accession>
<accession>O57469</accession>
<proteinExistence type="evidence at transcript level"/>